<gene>
    <name evidence="1" type="primary">uppS</name>
    <name type="ordered locus">SP_0261</name>
</gene>
<keyword id="KW-0002">3D-structure</keyword>
<keyword id="KW-0460">Magnesium</keyword>
<keyword id="KW-0479">Metal-binding</keyword>
<keyword id="KW-1185">Reference proteome</keyword>
<keyword id="KW-0808">Transferase</keyword>
<reference key="1">
    <citation type="journal article" date="2001" name="Science">
        <title>Complete genome sequence of a virulent isolate of Streptococcus pneumoniae.</title>
        <authorList>
            <person name="Tettelin H."/>
            <person name="Nelson K.E."/>
            <person name="Paulsen I.T."/>
            <person name="Eisen J.A."/>
            <person name="Read T.D."/>
            <person name="Peterson S.N."/>
            <person name="Heidelberg J.F."/>
            <person name="DeBoy R.T."/>
            <person name="Haft D.H."/>
            <person name="Dodson R.J."/>
            <person name="Durkin A.S."/>
            <person name="Gwinn M.L."/>
            <person name="Kolonay J.F."/>
            <person name="Nelson W.C."/>
            <person name="Peterson J.D."/>
            <person name="Umayam L.A."/>
            <person name="White O."/>
            <person name="Salzberg S.L."/>
            <person name="Lewis M.R."/>
            <person name="Radune D."/>
            <person name="Holtzapple E.K."/>
            <person name="Khouri H.M."/>
            <person name="Wolf A.M."/>
            <person name="Utterback T.R."/>
            <person name="Hansen C.L."/>
            <person name="McDonald L.A."/>
            <person name="Feldblyum T.V."/>
            <person name="Angiuoli S.V."/>
            <person name="Dickinson T."/>
            <person name="Hickey E.K."/>
            <person name="Holt I.E."/>
            <person name="Loftus B.J."/>
            <person name="Yang F."/>
            <person name="Smith H.O."/>
            <person name="Venter J.C."/>
            <person name="Dougherty B.A."/>
            <person name="Morrison D.A."/>
            <person name="Hollingshead S.K."/>
            <person name="Fraser C.M."/>
        </authorList>
    </citation>
    <scope>NUCLEOTIDE SEQUENCE [LARGE SCALE GENOMIC DNA]</scope>
    <source>
        <strain>ATCC BAA-334 / TIGR4</strain>
    </source>
</reference>
<protein>
    <recommendedName>
        <fullName evidence="1">Isoprenyl transferase</fullName>
        <ecNumber evidence="1">2.5.1.-</ecNumber>
    </recommendedName>
</protein>
<dbReference type="EC" id="2.5.1.-" evidence="1"/>
<dbReference type="EMBL" id="AE005672">
    <property type="protein sequence ID" value="AAK74439.1"/>
    <property type="molecule type" value="Genomic_DNA"/>
</dbReference>
<dbReference type="PIR" id="F95030">
    <property type="entry name" value="F95030"/>
</dbReference>
<dbReference type="RefSeq" id="WP_000466719.1">
    <property type="nucleotide sequence ID" value="NZ_CP155539.1"/>
</dbReference>
<dbReference type="PDB" id="5KH2">
    <property type="method" value="X-ray"/>
    <property type="resolution" value="2.30 A"/>
    <property type="chains" value="A/B/C/D=1-252"/>
</dbReference>
<dbReference type="PDB" id="5KH4">
    <property type="method" value="X-ray"/>
    <property type="resolution" value="3.20 A"/>
    <property type="chains" value="A/B=1-252"/>
</dbReference>
<dbReference type="PDB" id="5KH5">
    <property type="method" value="X-ray"/>
    <property type="resolution" value="2.63 A"/>
    <property type="chains" value="A/B=1-252"/>
</dbReference>
<dbReference type="PDBsum" id="5KH2"/>
<dbReference type="PDBsum" id="5KH4"/>
<dbReference type="PDBsum" id="5KH5"/>
<dbReference type="SMR" id="Q97SR4"/>
<dbReference type="IntAct" id="Q97SR4">
    <property type="interactions" value="19"/>
</dbReference>
<dbReference type="BindingDB" id="Q97SR4"/>
<dbReference type="ChEMBL" id="CHEMBL1075025"/>
<dbReference type="PaxDb" id="170187-SP_0261"/>
<dbReference type="EnsemblBacteria" id="AAK74439">
    <property type="protein sequence ID" value="AAK74439"/>
    <property type="gene ID" value="SP_0261"/>
</dbReference>
<dbReference type="KEGG" id="spn:SP_0261"/>
<dbReference type="eggNOG" id="COG0020">
    <property type="taxonomic scope" value="Bacteria"/>
</dbReference>
<dbReference type="PhylomeDB" id="Q97SR4"/>
<dbReference type="BioCyc" id="SPNE170187:G1FZB-268-MONOMER"/>
<dbReference type="BRENDA" id="2.5.1.31">
    <property type="organism ID" value="1960"/>
</dbReference>
<dbReference type="Proteomes" id="UP000000585">
    <property type="component" value="Chromosome"/>
</dbReference>
<dbReference type="GO" id="GO:0005829">
    <property type="term" value="C:cytosol"/>
    <property type="evidence" value="ECO:0007669"/>
    <property type="project" value="TreeGrafter"/>
</dbReference>
<dbReference type="GO" id="GO:0008834">
    <property type="term" value="F:ditrans,polycis-undecaprenyl-diphosphate synthase [(2E,6E)-farnesyl-diphosphate specific] activity"/>
    <property type="evidence" value="ECO:0007669"/>
    <property type="project" value="TreeGrafter"/>
</dbReference>
<dbReference type="GO" id="GO:0000287">
    <property type="term" value="F:magnesium ion binding"/>
    <property type="evidence" value="ECO:0007669"/>
    <property type="project" value="UniProtKB-UniRule"/>
</dbReference>
<dbReference type="GO" id="GO:0030145">
    <property type="term" value="F:manganese ion binding"/>
    <property type="evidence" value="ECO:0007669"/>
    <property type="project" value="TreeGrafter"/>
</dbReference>
<dbReference type="GO" id="GO:0016094">
    <property type="term" value="P:polyprenol biosynthetic process"/>
    <property type="evidence" value="ECO:0007669"/>
    <property type="project" value="TreeGrafter"/>
</dbReference>
<dbReference type="CDD" id="cd00475">
    <property type="entry name" value="Cis_IPPS"/>
    <property type="match status" value="1"/>
</dbReference>
<dbReference type="FunFam" id="3.40.1180.10:FF:000001">
    <property type="entry name" value="(2E,6E)-farnesyl-diphosphate-specific ditrans,polycis-undecaprenyl-diphosphate synthase"/>
    <property type="match status" value="1"/>
</dbReference>
<dbReference type="Gene3D" id="3.40.1180.10">
    <property type="entry name" value="Decaprenyl diphosphate synthase-like"/>
    <property type="match status" value="1"/>
</dbReference>
<dbReference type="HAMAP" id="MF_01139">
    <property type="entry name" value="ISPT"/>
    <property type="match status" value="1"/>
</dbReference>
<dbReference type="InterPro" id="IPR001441">
    <property type="entry name" value="UPP_synth-like"/>
</dbReference>
<dbReference type="InterPro" id="IPR018520">
    <property type="entry name" value="UPP_synth-like_CS"/>
</dbReference>
<dbReference type="InterPro" id="IPR036424">
    <property type="entry name" value="UPP_synth-like_sf"/>
</dbReference>
<dbReference type="NCBIfam" id="NF011405">
    <property type="entry name" value="PRK14830.1"/>
    <property type="match status" value="1"/>
</dbReference>
<dbReference type="NCBIfam" id="TIGR00055">
    <property type="entry name" value="uppS"/>
    <property type="match status" value="1"/>
</dbReference>
<dbReference type="PANTHER" id="PTHR10291:SF0">
    <property type="entry name" value="DEHYDRODOLICHYL DIPHOSPHATE SYNTHASE 2"/>
    <property type="match status" value="1"/>
</dbReference>
<dbReference type="PANTHER" id="PTHR10291">
    <property type="entry name" value="DEHYDRODOLICHYL DIPHOSPHATE SYNTHASE FAMILY MEMBER"/>
    <property type="match status" value="1"/>
</dbReference>
<dbReference type="Pfam" id="PF01255">
    <property type="entry name" value="Prenyltransf"/>
    <property type="match status" value="1"/>
</dbReference>
<dbReference type="SUPFAM" id="SSF64005">
    <property type="entry name" value="Undecaprenyl diphosphate synthase"/>
    <property type="match status" value="1"/>
</dbReference>
<dbReference type="PROSITE" id="PS01066">
    <property type="entry name" value="UPP_SYNTHASE"/>
    <property type="match status" value="1"/>
</dbReference>
<organism>
    <name type="scientific">Streptococcus pneumoniae serotype 4 (strain ATCC BAA-334 / TIGR4)</name>
    <dbReference type="NCBI Taxonomy" id="170187"/>
    <lineage>
        <taxon>Bacteria</taxon>
        <taxon>Bacillati</taxon>
        <taxon>Bacillota</taxon>
        <taxon>Bacilli</taxon>
        <taxon>Lactobacillales</taxon>
        <taxon>Streptococcaceae</taxon>
        <taxon>Streptococcus</taxon>
    </lineage>
</organism>
<evidence type="ECO:0000255" key="1">
    <source>
        <dbReference type="HAMAP-Rule" id="MF_01139"/>
    </source>
</evidence>
<evidence type="ECO:0007829" key="2">
    <source>
        <dbReference type="PDB" id="5KH2"/>
    </source>
</evidence>
<evidence type="ECO:0007829" key="3">
    <source>
        <dbReference type="PDB" id="5KH4"/>
    </source>
</evidence>
<sequence length="252" mass="28705">MFGFFKKDKAVEVEVPTQVPAHIGIIMDGNGRWAKKRMQPRVFGHKAGMEALQTVTKAANKLGVKVITVYAFSTENWTRPDQEVKFIMNLPVEFYDNYVPELHANNVKIQMIGETDRLPKQTFEALTKAEELTKNNTGLILNFALNYGGRAEITQALKLISQDVLDAKINPGDITEELIGNYLFTQHLPKDLRDPDLIIRTSGELRLSNFLPWQGAYSELYFTDTLWPDFDEAALQEAILAYNRRHRRFGGV</sequence>
<proteinExistence type="evidence at protein level"/>
<name>ISPT_STRPN</name>
<accession>Q97SR4</accession>
<feature type="chain" id="PRO_0000123690" description="Isoprenyl transferase">
    <location>
        <begin position="1"/>
        <end position="252"/>
    </location>
</feature>
<feature type="active site" evidence="1">
    <location>
        <position position="28"/>
    </location>
</feature>
<feature type="active site" description="Proton acceptor" evidence="1">
    <location>
        <position position="76"/>
    </location>
</feature>
<feature type="binding site" evidence="1">
    <location>
        <position position="28"/>
    </location>
    <ligand>
        <name>Mg(2+)</name>
        <dbReference type="ChEBI" id="CHEBI:18420"/>
    </ligand>
</feature>
<feature type="binding site" evidence="1">
    <location>
        <begin position="29"/>
        <end position="32"/>
    </location>
    <ligand>
        <name>substrate</name>
    </ligand>
</feature>
<feature type="binding site" evidence="1">
    <location>
        <position position="33"/>
    </location>
    <ligand>
        <name>substrate</name>
    </ligand>
</feature>
<feature type="binding site" evidence="1">
    <location>
        <position position="41"/>
    </location>
    <ligand>
        <name>substrate</name>
    </ligand>
</feature>
<feature type="binding site" evidence="1">
    <location>
        <position position="45"/>
    </location>
    <ligand>
        <name>substrate</name>
    </ligand>
</feature>
<feature type="binding site" evidence="1">
    <location>
        <begin position="73"/>
        <end position="75"/>
    </location>
    <ligand>
        <name>substrate</name>
    </ligand>
</feature>
<feature type="binding site" evidence="1">
    <location>
        <position position="77"/>
    </location>
    <ligand>
        <name>substrate</name>
    </ligand>
</feature>
<feature type="binding site" evidence="1">
    <location>
        <position position="79"/>
    </location>
    <ligand>
        <name>substrate</name>
    </ligand>
</feature>
<feature type="binding site" evidence="1">
    <location>
        <position position="200"/>
    </location>
    <ligand>
        <name>substrate</name>
    </ligand>
</feature>
<feature type="binding site" evidence="1">
    <location>
        <begin position="206"/>
        <end position="208"/>
    </location>
    <ligand>
        <name>substrate</name>
    </ligand>
</feature>
<feature type="binding site" evidence="1">
    <location>
        <position position="219"/>
    </location>
    <ligand>
        <name>Mg(2+)</name>
        <dbReference type="ChEBI" id="CHEBI:18420"/>
    </ligand>
</feature>
<feature type="strand" evidence="2">
    <location>
        <begin position="21"/>
        <end position="27"/>
    </location>
</feature>
<feature type="helix" evidence="2">
    <location>
        <begin position="30"/>
        <end position="36"/>
    </location>
</feature>
<feature type="helix" evidence="2">
    <location>
        <begin position="41"/>
        <end position="62"/>
    </location>
</feature>
<feature type="strand" evidence="2">
    <location>
        <begin position="66"/>
        <end position="71"/>
    </location>
</feature>
<feature type="helix" evidence="3">
    <location>
        <begin position="74"/>
        <end position="78"/>
    </location>
</feature>
<feature type="helix" evidence="2">
    <location>
        <begin position="80"/>
        <end position="97"/>
    </location>
</feature>
<feature type="helix" evidence="2">
    <location>
        <begin position="99"/>
        <end position="104"/>
    </location>
</feature>
<feature type="strand" evidence="2">
    <location>
        <begin position="108"/>
        <end position="113"/>
    </location>
</feature>
<feature type="helix" evidence="2">
    <location>
        <begin position="120"/>
        <end position="133"/>
    </location>
</feature>
<feature type="strand" evidence="2">
    <location>
        <begin position="140"/>
        <end position="144"/>
    </location>
</feature>
<feature type="helix" evidence="2">
    <location>
        <begin position="149"/>
        <end position="165"/>
    </location>
</feature>
<feature type="helix" evidence="2">
    <location>
        <begin position="171"/>
        <end position="173"/>
    </location>
</feature>
<feature type="helix" evidence="2">
    <location>
        <begin position="176"/>
        <end position="182"/>
    </location>
</feature>
<feature type="helix" evidence="2">
    <location>
        <begin position="184"/>
        <end position="187"/>
    </location>
</feature>
<feature type="turn" evidence="2">
    <location>
        <begin position="190"/>
        <end position="192"/>
    </location>
</feature>
<feature type="strand" evidence="2">
    <location>
        <begin position="196"/>
        <end position="200"/>
    </location>
</feature>
<feature type="turn" evidence="2">
    <location>
        <begin position="212"/>
        <end position="217"/>
    </location>
</feature>
<feature type="strand" evidence="2">
    <location>
        <begin position="219"/>
        <end position="222"/>
    </location>
</feature>
<feature type="helix" evidence="2">
    <location>
        <begin position="227"/>
        <end position="229"/>
    </location>
</feature>
<feature type="helix" evidence="2">
    <location>
        <begin position="232"/>
        <end position="245"/>
    </location>
</feature>
<comment type="function">
    <text evidence="1">Catalyzes the condensation of isopentenyl diphosphate (IPP) with allylic pyrophosphates generating different type of terpenoids.</text>
</comment>
<comment type="cofactor">
    <cofactor evidence="1">
        <name>Mg(2+)</name>
        <dbReference type="ChEBI" id="CHEBI:18420"/>
    </cofactor>
    <text evidence="1">Binds 2 magnesium ions per subunit.</text>
</comment>
<comment type="subunit">
    <text evidence="1">Homodimer.</text>
</comment>
<comment type="interaction">
    <interactant intactId="EBI-2206983">
        <id>Q97SR4</id>
    </interactant>
    <interactant intactId="EBI-2207344">
        <id>P0A2W6</id>
        <label>acpS</label>
    </interactant>
    <organismsDiffer>false</organismsDiffer>
    <experiments>2</experiments>
</comment>
<comment type="interaction">
    <interactant intactId="EBI-2206983">
        <id>Q97SR4</id>
    </interactant>
    <interactant intactId="EBI-2207316">
        <id>P63544</id>
        <label>apt</label>
    </interactant>
    <organismsDiffer>false</organismsDiffer>
    <experiments>2</experiments>
</comment>
<comment type="interaction">
    <interactant intactId="EBI-2206983">
        <id>Q97SR4</id>
    </interactant>
    <interactant intactId="EBI-2207290">
        <id>P63588</id>
        <label>aroD</label>
    </interactant>
    <organismsDiffer>false</organismsDiffer>
    <experiments>2</experiments>
</comment>
<comment type="interaction">
    <interactant intactId="EBI-2206983">
        <id>Q97SR4</id>
    </interactant>
    <interactant intactId="EBI-2207079">
        <id>P95830</id>
        <label>dnaJ</label>
    </interactant>
    <organismsDiffer>false</organismsDiffer>
    <experiments>2</experiments>
</comment>
<comment type="interaction">
    <interactant intactId="EBI-2206983">
        <id>Q97SR4</id>
    </interactant>
    <interactant intactId="EBI-2207206">
        <id>Q97QS2</id>
        <label>eno</label>
    </interactant>
    <organismsDiffer>false</organismsDiffer>
    <experiments>2</experiments>
</comment>
<comment type="interaction">
    <interactant intactId="EBI-2206983">
        <id>Q97SR4</id>
    </interactant>
    <interactant intactId="EBI-2207023">
        <id>Q97SE7</id>
        <label>gatB</label>
    </interactant>
    <organismsDiffer>false</organismsDiffer>
    <experiments>2</experiments>
</comment>
<comment type="interaction">
    <interactant intactId="EBI-2206983">
        <id>Q97SR4</id>
    </interactant>
    <interactant intactId="EBI-2207053">
        <id>Q97SE5</id>
        <label>gatC</label>
    </interactant>
    <organismsDiffer>false</organismsDiffer>
    <experiments>2</experiments>
</comment>
<comment type="interaction">
    <interactant intactId="EBI-2206983">
        <id>Q97SR4</id>
    </interactant>
    <interactant intactId="EBI-2206949">
        <id>Q97NV3</id>
        <label>groES</label>
    </interactant>
    <organismsDiffer>false</organismsDiffer>
    <experiments>2</experiments>
</comment>
<comment type="interaction">
    <interactant intactId="EBI-2206983">
        <id>Q97SR4</id>
    </interactant>
    <interactant intactId="EBI-2207065">
        <id>Q97S73</id>
        <label>grpE</label>
    </interactant>
    <organismsDiffer>false</organismsDiffer>
    <experiments>2</experiments>
</comment>
<comment type="interaction">
    <interactant intactId="EBI-2206983">
        <id>Q97SR4</id>
    </interactant>
    <interactant intactId="EBI-2207149">
        <id>P65144</id>
        <label>infC</label>
    </interactant>
    <organismsDiffer>false</organismsDiffer>
    <experiments>2</experiments>
</comment>
<comment type="interaction">
    <interactant intactId="EBI-2206983">
        <id>Q97SR4</id>
    </interactant>
    <interactant intactId="EBI-2207447">
        <id>A0A0H2UNP1</id>
        <label>lacF-1</label>
    </interactant>
    <organismsDiffer>false</organismsDiffer>
    <experiments>3</experiments>
</comment>
<comment type="interaction">
    <interactant intactId="EBI-2206983">
        <id>Q97SR4</id>
    </interactant>
    <interactant intactId="EBI-2207435">
        <id>P0A4T1</id>
        <label>malR</label>
    </interactant>
    <organismsDiffer>false</organismsDiffer>
    <experiments>2</experiments>
</comment>
<comment type="interaction">
    <interactant intactId="EBI-2206983">
        <id>Q97SR4</id>
    </interactant>
    <interactant intactId="EBI-2207232">
        <id>P41354</id>
        <label>mutX</label>
    </interactant>
    <organismsDiffer>false</organismsDiffer>
    <experiments>2</experiments>
</comment>
<comment type="interaction">
    <interactant intactId="EBI-2206983">
        <id>Q97SR4</id>
    </interactant>
    <interactant intactId="EBI-2206955">
        <id>P65887</id>
        <label>purA</label>
    </interactant>
    <organismsDiffer>false</organismsDiffer>
    <experiments>2</experiments>
</comment>
<comment type="interaction">
    <interactant intactId="EBI-2206983">
        <id>Q97SR4</id>
    </interactant>
    <interactant intactId="EBI-2207109">
        <id>P0CB75</id>
        <label>pyrF</label>
    </interactant>
    <organismsDiffer>false</organismsDiffer>
    <experiments>2</experiments>
</comment>
<comment type="interaction">
    <interactant intactId="EBI-2206983">
        <id>Q97SR4</id>
    </interactant>
    <interactant intactId="EBI-2207248">
        <id>P65946</id>
        <label>pyrR</label>
    </interactant>
    <organismsDiffer>false</organismsDiffer>
    <experiments>2</experiments>
</comment>
<comment type="interaction">
    <interactant intactId="EBI-2206983">
        <id>Q97SR4</id>
    </interactant>
    <interactant intactId="EBI-2207177">
        <id>Q97QV8</id>
        <label>rex</label>
    </interactant>
    <organismsDiffer>false</organismsDiffer>
    <experiments>2</experiments>
</comment>
<comment type="interaction">
    <interactant intactId="EBI-2206983">
        <id>Q97SR4</id>
    </interactant>
    <interactant intactId="EBI-2206697">
        <id>Q97NX6</id>
        <label>scpB</label>
    </interactant>
    <organismsDiffer>false</organismsDiffer>
    <experiments>2</experiments>
</comment>
<comment type="interaction">
    <interactant intactId="EBI-2206983">
        <id>Q97SR4</id>
    </interactant>
    <interactant intactId="EBI-6474424">
        <id>A0A0H2UQ93</id>
        <label>smc</label>
    </interactant>
    <organismsDiffer>false</organismsDiffer>
    <experiments>2</experiments>
</comment>
<comment type="similarity">
    <text evidence="1">Belongs to the UPP synthase family.</text>
</comment>